<accession>O04433</accession>
<accession>A0A0P0WEX8</accession>
<accession>Q0J9Z6</accession>
<accession>Q7XPR3</accession>
<comment type="function">
    <text evidence="2">Component of the signal recognition particle (SRP) complex, a ribonucleoprotein complex that mediates the cotranslational targeting of secretory and membrane proteins to the endoplasmic reticulum (ER) (By similarity). SRP9 together with SRP14 and the Alu portion of the SRP RNA, constitutes the elongation arrest domain of SRP (By similarity). The complex of SRP9 and SRP14 is required for SRP RNA binding (By similarity).</text>
</comment>
<comment type="subunit">
    <text evidence="1 2">Heterodimer with SRP9; binds RNA as heterodimer (By similarity). Component of a signal recognition particle (SRP) complex that consists of a 7SL RNA molecule of 300 nucleotides and six protein subunits: SRP72, SRP68, SRP54, SRP19, SRP14 and SRP9 (By similarity).</text>
</comment>
<comment type="subcellular location">
    <subcellularLocation>
        <location>Cytoplasm</location>
    </subcellularLocation>
</comment>
<comment type="similarity">
    <text evidence="4">Belongs to the SRP14 family.</text>
</comment>
<sequence length="132" mass="14839">MVVLQPDPFLSELTSMYERSTEKGSVWVTMKRSSMKCQARLKKMAAKGEAVEYRCLVRATDGKKNICTALSAKEYLKFQASYATVLKAHMHALKKRERKDKKKAAEVEKIPEKAPKKQKKAPSSKKSAGSKS</sequence>
<evidence type="ECO:0000250" key="1">
    <source>
        <dbReference type="UniProtKB" id="P16255"/>
    </source>
</evidence>
<evidence type="ECO:0000250" key="2">
    <source>
        <dbReference type="UniProtKB" id="P37108"/>
    </source>
</evidence>
<evidence type="ECO:0000256" key="3">
    <source>
        <dbReference type="SAM" id="MobiDB-lite"/>
    </source>
</evidence>
<evidence type="ECO:0000305" key="4"/>
<evidence type="ECO:0000312" key="5">
    <source>
        <dbReference type="EMBL" id="BAF15841.1"/>
    </source>
</evidence>
<evidence type="ECO:0000312" key="6">
    <source>
        <dbReference type="EMBL" id="EEE61718.1"/>
    </source>
</evidence>
<dbReference type="EMBL" id="Y10118">
    <property type="protein sequence ID" value="CAA71204.1"/>
    <property type="molecule type" value="mRNA"/>
</dbReference>
<dbReference type="EMBL" id="AL606645">
    <property type="protein sequence ID" value="CAE03502.2"/>
    <property type="molecule type" value="Genomic_DNA"/>
</dbReference>
<dbReference type="EMBL" id="AP008210">
    <property type="protein sequence ID" value="BAF15841.1"/>
    <property type="molecule type" value="Genomic_DNA"/>
</dbReference>
<dbReference type="EMBL" id="AP014960">
    <property type="protein sequence ID" value="BAS91088.1"/>
    <property type="molecule type" value="Genomic_DNA"/>
</dbReference>
<dbReference type="EMBL" id="CM000141">
    <property type="protein sequence ID" value="EEE61718.1"/>
    <property type="molecule type" value="Genomic_DNA"/>
</dbReference>
<dbReference type="PIR" id="T04105">
    <property type="entry name" value="T04105"/>
</dbReference>
<dbReference type="RefSeq" id="XP_015635504.1">
    <property type="nucleotide sequence ID" value="XM_015780018.1"/>
</dbReference>
<dbReference type="SMR" id="O04433"/>
<dbReference type="FunCoup" id="O04433">
    <property type="interactions" value="2153"/>
</dbReference>
<dbReference type="STRING" id="39947.O04433"/>
<dbReference type="PaxDb" id="39947-O04433"/>
<dbReference type="EnsemblPlants" id="Os04t0623700-01">
    <property type="protein sequence ID" value="Os04t0623700-01"/>
    <property type="gene ID" value="Os04g0623700"/>
</dbReference>
<dbReference type="Gramene" id="Os04t0623700-01">
    <property type="protein sequence ID" value="Os04t0623700-01"/>
    <property type="gene ID" value="Os04g0623700"/>
</dbReference>
<dbReference type="KEGG" id="dosa:Os04g0623700"/>
<dbReference type="eggNOG" id="KOG1761">
    <property type="taxonomic scope" value="Eukaryota"/>
</dbReference>
<dbReference type="HOGENOM" id="CLU_094309_2_0_1"/>
<dbReference type="InParanoid" id="O04433"/>
<dbReference type="OMA" id="RFNGHNK"/>
<dbReference type="OrthoDB" id="19209at2759"/>
<dbReference type="Proteomes" id="UP000000763">
    <property type="component" value="Chromosome 4"/>
</dbReference>
<dbReference type="Proteomes" id="UP000007752">
    <property type="component" value="Chromosome 4"/>
</dbReference>
<dbReference type="Proteomes" id="UP000059680">
    <property type="component" value="Chromosome 4"/>
</dbReference>
<dbReference type="GO" id="GO:0005786">
    <property type="term" value="C:signal recognition particle, endoplasmic reticulum targeting"/>
    <property type="evidence" value="ECO:0000318"/>
    <property type="project" value="GO_Central"/>
</dbReference>
<dbReference type="GO" id="GO:0008312">
    <property type="term" value="F:7S RNA binding"/>
    <property type="evidence" value="ECO:0007669"/>
    <property type="project" value="InterPro"/>
</dbReference>
<dbReference type="GO" id="GO:0030942">
    <property type="term" value="F:endoplasmic reticulum signal peptide binding"/>
    <property type="evidence" value="ECO:0007669"/>
    <property type="project" value="InterPro"/>
</dbReference>
<dbReference type="GO" id="GO:0045047">
    <property type="term" value="P:protein targeting to ER"/>
    <property type="evidence" value="ECO:0000318"/>
    <property type="project" value="GO_Central"/>
</dbReference>
<dbReference type="GO" id="GO:0006614">
    <property type="term" value="P:SRP-dependent cotranslational protein targeting to membrane"/>
    <property type="evidence" value="ECO:0007669"/>
    <property type="project" value="InterPro"/>
</dbReference>
<dbReference type="FunFam" id="3.30.720.10:FF:000004">
    <property type="entry name" value="Signal recognition particle 14 kDa protein"/>
    <property type="match status" value="1"/>
</dbReference>
<dbReference type="Gene3D" id="3.30.720.10">
    <property type="entry name" value="Signal recognition particle alu RNA binding heterodimer, srp9/1"/>
    <property type="match status" value="1"/>
</dbReference>
<dbReference type="InterPro" id="IPR003210">
    <property type="entry name" value="Signal_recog_particle_SRP14"/>
</dbReference>
<dbReference type="InterPro" id="IPR009018">
    <property type="entry name" value="Signal_recog_particle_SRP9/14"/>
</dbReference>
<dbReference type="PANTHER" id="PTHR12013">
    <property type="entry name" value="SIGNAL RECOGNITION PARTICLE 14 KD PROTEIN"/>
    <property type="match status" value="1"/>
</dbReference>
<dbReference type="Pfam" id="PF02290">
    <property type="entry name" value="SRP14"/>
    <property type="match status" value="1"/>
</dbReference>
<dbReference type="SUPFAM" id="SSF54762">
    <property type="entry name" value="Signal recognition particle alu RNA binding heterodimer, SRP9/14"/>
    <property type="match status" value="1"/>
</dbReference>
<gene>
    <name type="primary">SRP14</name>
    <name evidence="5" type="ordered locus">Os04g0623700</name>
    <name evidence="4" type="ordered locus">LOC_Os04g53220</name>
    <name evidence="6" type="ORF">OsJ_16219</name>
    <name type="ORF">OSJNBa0053K19.10</name>
</gene>
<reference key="1">
    <citation type="submission" date="1996-12" db="EMBL/GenBank/DDBJ databases">
        <authorList>
            <person name="Bui N."/>
            <person name="Wolff N."/>
            <person name="Strub K."/>
        </authorList>
    </citation>
    <scope>NUCLEOTIDE SEQUENCE [MRNA]</scope>
    <source>
        <strain>cv. Nipponbare</strain>
        <tissue>Etiolated root</tissue>
    </source>
</reference>
<reference key="2">
    <citation type="journal article" date="2002" name="Nature">
        <title>Sequence and analysis of rice chromosome 4.</title>
        <authorList>
            <person name="Feng Q."/>
            <person name="Zhang Y."/>
            <person name="Hao P."/>
            <person name="Wang S."/>
            <person name="Fu G."/>
            <person name="Huang Y."/>
            <person name="Li Y."/>
            <person name="Zhu J."/>
            <person name="Liu Y."/>
            <person name="Hu X."/>
            <person name="Jia P."/>
            <person name="Zhang Y."/>
            <person name="Zhao Q."/>
            <person name="Ying K."/>
            <person name="Yu S."/>
            <person name="Tang Y."/>
            <person name="Weng Q."/>
            <person name="Zhang L."/>
            <person name="Lu Y."/>
            <person name="Mu J."/>
            <person name="Lu Y."/>
            <person name="Zhang L.S."/>
            <person name="Yu Z."/>
            <person name="Fan D."/>
            <person name="Liu X."/>
            <person name="Lu T."/>
            <person name="Li C."/>
            <person name="Wu Y."/>
            <person name="Sun T."/>
            <person name="Lei H."/>
            <person name="Li T."/>
            <person name="Hu H."/>
            <person name="Guan J."/>
            <person name="Wu M."/>
            <person name="Zhang R."/>
            <person name="Zhou B."/>
            <person name="Chen Z."/>
            <person name="Chen L."/>
            <person name="Jin Z."/>
            <person name="Wang R."/>
            <person name="Yin H."/>
            <person name="Cai Z."/>
            <person name="Ren S."/>
            <person name="Lv G."/>
            <person name="Gu W."/>
            <person name="Zhu G."/>
            <person name="Tu Y."/>
            <person name="Jia J."/>
            <person name="Zhang Y."/>
            <person name="Chen J."/>
            <person name="Kang H."/>
            <person name="Chen X."/>
            <person name="Shao C."/>
            <person name="Sun Y."/>
            <person name="Hu Q."/>
            <person name="Zhang X."/>
            <person name="Zhang W."/>
            <person name="Wang L."/>
            <person name="Ding C."/>
            <person name="Sheng H."/>
            <person name="Gu J."/>
            <person name="Chen S."/>
            <person name="Ni L."/>
            <person name="Zhu F."/>
            <person name="Chen W."/>
            <person name="Lan L."/>
            <person name="Lai Y."/>
            <person name="Cheng Z."/>
            <person name="Gu M."/>
            <person name="Jiang J."/>
            <person name="Li J."/>
            <person name="Hong G."/>
            <person name="Xue Y."/>
            <person name="Han B."/>
        </authorList>
    </citation>
    <scope>NUCLEOTIDE SEQUENCE [LARGE SCALE GENOMIC DNA]</scope>
    <source>
        <strain>cv. Nipponbare</strain>
    </source>
</reference>
<reference key="3">
    <citation type="journal article" date="2005" name="Nature">
        <title>The map-based sequence of the rice genome.</title>
        <authorList>
            <consortium name="International rice genome sequencing project (IRGSP)"/>
        </authorList>
    </citation>
    <scope>NUCLEOTIDE SEQUENCE [LARGE SCALE GENOMIC DNA]</scope>
    <source>
        <strain>cv. Nipponbare</strain>
    </source>
</reference>
<reference key="4">
    <citation type="journal article" date="2008" name="Nucleic Acids Res.">
        <title>The rice annotation project database (RAP-DB): 2008 update.</title>
        <authorList>
            <consortium name="The rice annotation project (RAP)"/>
        </authorList>
    </citation>
    <scope>GENOME REANNOTATION</scope>
    <source>
        <strain>cv. Nipponbare</strain>
    </source>
</reference>
<reference key="5">
    <citation type="journal article" date="2013" name="Rice">
        <title>Improvement of the Oryza sativa Nipponbare reference genome using next generation sequence and optical map data.</title>
        <authorList>
            <person name="Kawahara Y."/>
            <person name="de la Bastide M."/>
            <person name="Hamilton J.P."/>
            <person name="Kanamori H."/>
            <person name="McCombie W.R."/>
            <person name="Ouyang S."/>
            <person name="Schwartz D.C."/>
            <person name="Tanaka T."/>
            <person name="Wu J."/>
            <person name="Zhou S."/>
            <person name="Childs K.L."/>
            <person name="Davidson R.M."/>
            <person name="Lin H."/>
            <person name="Quesada-Ocampo L."/>
            <person name="Vaillancourt B."/>
            <person name="Sakai H."/>
            <person name="Lee S.S."/>
            <person name="Kim J."/>
            <person name="Numa H."/>
            <person name="Itoh T."/>
            <person name="Buell C.R."/>
            <person name="Matsumoto T."/>
        </authorList>
    </citation>
    <scope>GENOME REANNOTATION</scope>
    <source>
        <strain>cv. Nipponbare</strain>
    </source>
</reference>
<reference key="6">
    <citation type="journal article" date="2005" name="PLoS Biol.">
        <title>The genomes of Oryza sativa: a history of duplications.</title>
        <authorList>
            <person name="Yu J."/>
            <person name="Wang J."/>
            <person name="Lin W."/>
            <person name="Li S."/>
            <person name="Li H."/>
            <person name="Zhou J."/>
            <person name="Ni P."/>
            <person name="Dong W."/>
            <person name="Hu S."/>
            <person name="Zeng C."/>
            <person name="Zhang J."/>
            <person name="Zhang Y."/>
            <person name="Li R."/>
            <person name="Xu Z."/>
            <person name="Li S."/>
            <person name="Li X."/>
            <person name="Zheng H."/>
            <person name="Cong L."/>
            <person name="Lin L."/>
            <person name="Yin J."/>
            <person name="Geng J."/>
            <person name="Li G."/>
            <person name="Shi J."/>
            <person name="Liu J."/>
            <person name="Lv H."/>
            <person name="Li J."/>
            <person name="Wang J."/>
            <person name="Deng Y."/>
            <person name="Ran L."/>
            <person name="Shi X."/>
            <person name="Wang X."/>
            <person name="Wu Q."/>
            <person name="Li C."/>
            <person name="Ren X."/>
            <person name="Wang J."/>
            <person name="Wang X."/>
            <person name="Li D."/>
            <person name="Liu D."/>
            <person name="Zhang X."/>
            <person name="Ji Z."/>
            <person name="Zhao W."/>
            <person name="Sun Y."/>
            <person name="Zhang Z."/>
            <person name="Bao J."/>
            <person name="Han Y."/>
            <person name="Dong L."/>
            <person name="Ji J."/>
            <person name="Chen P."/>
            <person name="Wu S."/>
            <person name="Liu J."/>
            <person name="Xiao Y."/>
            <person name="Bu D."/>
            <person name="Tan J."/>
            <person name="Yang L."/>
            <person name="Ye C."/>
            <person name="Zhang J."/>
            <person name="Xu J."/>
            <person name="Zhou Y."/>
            <person name="Yu Y."/>
            <person name="Zhang B."/>
            <person name="Zhuang S."/>
            <person name="Wei H."/>
            <person name="Liu B."/>
            <person name="Lei M."/>
            <person name="Yu H."/>
            <person name="Li Y."/>
            <person name="Xu H."/>
            <person name="Wei S."/>
            <person name="He X."/>
            <person name="Fang L."/>
            <person name="Zhang Z."/>
            <person name="Zhang Y."/>
            <person name="Huang X."/>
            <person name="Su Z."/>
            <person name="Tong W."/>
            <person name="Li J."/>
            <person name="Tong Z."/>
            <person name="Li S."/>
            <person name="Ye J."/>
            <person name="Wang L."/>
            <person name="Fang L."/>
            <person name="Lei T."/>
            <person name="Chen C.-S."/>
            <person name="Chen H.-C."/>
            <person name="Xu Z."/>
            <person name="Li H."/>
            <person name="Huang H."/>
            <person name="Zhang F."/>
            <person name="Xu H."/>
            <person name="Li N."/>
            <person name="Zhao C."/>
            <person name="Li S."/>
            <person name="Dong L."/>
            <person name="Huang Y."/>
            <person name="Li L."/>
            <person name="Xi Y."/>
            <person name="Qi Q."/>
            <person name="Li W."/>
            <person name="Zhang B."/>
            <person name="Hu W."/>
            <person name="Zhang Y."/>
            <person name="Tian X."/>
            <person name="Jiao Y."/>
            <person name="Liang X."/>
            <person name="Jin J."/>
            <person name="Gao L."/>
            <person name="Zheng W."/>
            <person name="Hao B."/>
            <person name="Liu S.-M."/>
            <person name="Wang W."/>
            <person name="Yuan L."/>
            <person name="Cao M."/>
            <person name="McDermott J."/>
            <person name="Samudrala R."/>
            <person name="Wang J."/>
            <person name="Wong G.K.-S."/>
            <person name="Yang H."/>
        </authorList>
    </citation>
    <scope>NUCLEOTIDE SEQUENCE [LARGE SCALE GENOMIC DNA]</scope>
    <source>
        <strain>cv. Nipponbare</strain>
    </source>
</reference>
<name>SRP14_ORYSJ</name>
<proteinExistence type="evidence at transcript level"/>
<organism>
    <name type="scientific">Oryza sativa subsp. japonica</name>
    <name type="common">Rice</name>
    <dbReference type="NCBI Taxonomy" id="39947"/>
    <lineage>
        <taxon>Eukaryota</taxon>
        <taxon>Viridiplantae</taxon>
        <taxon>Streptophyta</taxon>
        <taxon>Embryophyta</taxon>
        <taxon>Tracheophyta</taxon>
        <taxon>Spermatophyta</taxon>
        <taxon>Magnoliopsida</taxon>
        <taxon>Liliopsida</taxon>
        <taxon>Poales</taxon>
        <taxon>Poaceae</taxon>
        <taxon>BOP clade</taxon>
        <taxon>Oryzoideae</taxon>
        <taxon>Oryzeae</taxon>
        <taxon>Oryzinae</taxon>
        <taxon>Oryza</taxon>
        <taxon>Oryza sativa</taxon>
    </lineage>
</organism>
<feature type="chain" id="PRO_0000135194" description="Signal recognition particle 14 kDa protein">
    <location>
        <begin position="1"/>
        <end position="132"/>
    </location>
</feature>
<feature type="region of interest" description="Disordered" evidence="3">
    <location>
        <begin position="93"/>
        <end position="132"/>
    </location>
</feature>
<feature type="compositionally biased region" description="Basic residues" evidence="3">
    <location>
        <begin position="93"/>
        <end position="102"/>
    </location>
</feature>
<feature type="compositionally biased region" description="Basic and acidic residues" evidence="3">
    <location>
        <begin position="103"/>
        <end position="115"/>
    </location>
</feature>
<protein>
    <recommendedName>
        <fullName>Signal recognition particle 14 kDa protein</fullName>
        <shortName>SRP14</shortName>
    </recommendedName>
</protein>
<keyword id="KW-0963">Cytoplasm</keyword>
<keyword id="KW-1185">Reference proteome</keyword>
<keyword id="KW-0687">Ribonucleoprotein</keyword>
<keyword id="KW-0694">RNA-binding</keyword>
<keyword id="KW-0733">Signal recognition particle</keyword>